<organism>
    <name type="scientific">Methanothermobacter thermautotrophicus (strain Winter)</name>
    <name type="common">Methanobacterium thermoautotrophicum</name>
    <dbReference type="NCBI Taxonomy" id="79930"/>
    <lineage>
        <taxon>Archaea</taxon>
        <taxon>Methanobacteriati</taxon>
        <taxon>Methanobacteriota</taxon>
        <taxon>Methanomada group</taxon>
        <taxon>Methanobacteria</taxon>
        <taxon>Methanobacteriales</taxon>
        <taxon>Methanobacteriaceae</taxon>
        <taxon>Methanothermobacter</taxon>
    </lineage>
</organism>
<sequence>MKLAILGAGCYRTHAASGITNFSRACEVAEMVGKPEIAMTHSTITMGAELKELAGVDEVVVADPVFDNQFTVIDDFAYEDVIEAHKEDPEKIMPQIREKVNEVAKELPKPPEGAIHFTHPEDLGFEITTDDREAVADADFIMTWFPKGDMQPGIINKFIDDIKPGAIVTHACTIPTTKFYKIFEEKHGDLVTRPETLNVTSYHPGAVPEMKGQVYIAEAYASEEAINTLFELGQKARGNAYKLPAELLGPVCDMCSALTAITYAGILTYRDSVTQVLGAPAGFAQMMAKESLEQLTALMDKVGIDKMEESLDPGALLGTADSMNFGASAEILPTVFEVLEKRKK</sequence>
<comment type="function">
    <text evidence="1">Catalyzes the reversible reduction of methenyl-H(4)MPT(+) to methylene-H(4)MPT.</text>
</comment>
<comment type="catalytic activity">
    <reaction>
        <text>5,10-methenyl-5,6,7,8-tetrahydromethanopterin + H2 = 5,10-methylenetetrahydromethanopterin + H(+)</text>
        <dbReference type="Rhea" id="RHEA:20017"/>
        <dbReference type="ChEBI" id="CHEBI:15378"/>
        <dbReference type="ChEBI" id="CHEBI:18276"/>
        <dbReference type="ChEBI" id="CHEBI:57818"/>
        <dbReference type="ChEBI" id="CHEBI:58337"/>
        <dbReference type="EC" id="1.12.98.2"/>
    </reaction>
</comment>
<comment type="pathway">
    <text>One-carbon metabolism; methanogenesis from CO(2); 5,10-methylene-5,6,7,8-tetrahydromethanopterin from 5,10-methenyl-5,6,7,8-tetrahydromethanopterin (hydrogen route): step 1/1.</text>
</comment>
<comment type="similarity">
    <text evidence="2">Belongs to the HMD family.</text>
</comment>
<reference key="1">
    <citation type="journal article" date="1995" name="J. Bacteriol.">
        <title>Organization and growth phase-dependent transcription of methane genes in two regions of the Methanobacterium thermoautotrophicum genome.</title>
        <authorList>
            <person name="Noelling J."/>
            <person name="Pihl T.D."/>
            <person name="Vriesema A."/>
            <person name="Reeve J.N."/>
        </authorList>
    </citation>
    <scope>NUCLEOTIDE SEQUENCE [GENOMIC DNA]</scope>
</reference>
<gene>
    <name type="primary">hmd</name>
    <name type="synonym">mth</name>
</gene>
<accession>P81221</accession>
<accession>Q50526</accession>
<protein>
    <recommendedName>
        <fullName>5,10-methenyltetrahydromethanopterin hydrogenase</fullName>
        <ecNumber>1.12.98.2</ecNumber>
    </recommendedName>
    <alternativeName>
        <fullName>H(2)-dependent methylene-H(4)MPT dehydrogenase</fullName>
    </alternativeName>
    <alternativeName>
        <fullName>H(2)-forming N(5),N(10)-methylenetetrahydromethanopterin dehydrogenase</fullName>
    </alternativeName>
    <alternativeName>
        <fullName>N(5),N(10)-methenyltetrahydromethanopterin hydrogenase</fullName>
    </alternativeName>
</protein>
<name>HMD_METTW</name>
<keyword id="KW-0484">Methanogenesis</keyword>
<keyword id="KW-0554">One-carbon metabolism</keyword>
<keyword id="KW-0560">Oxidoreductase</keyword>
<evidence type="ECO:0000250" key="1"/>
<evidence type="ECO:0000305" key="2"/>
<proteinExistence type="inferred from homology"/>
<feature type="chain" id="PRO_0000218513" description="5,10-methenyltetrahydromethanopterin hydrogenase">
    <location>
        <begin position="1"/>
        <end position="344"/>
    </location>
</feature>
<dbReference type="EC" id="1.12.98.2"/>
<dbReference type="EMBL" id="U19364">
    <property type="protein sequence ID" value="AAA87437.1"/>
    <property type="molecule type" value="Genomic_DNA"/>
</dbReference>
<dbReference type="SMR" id="P81221"/>
<dbReference type="UniPathway" id="UPA00640">
    <property type="reaction ID" value="UER00696"/>
</dbReference>
<dbReference type="GO" id="GO:0047068">
    <property type="term" value="F:N5,N10-methenyltetrahydromethanopterin hydrogenase activity"/>
    <property type="evidence" value="ECO:0007669"/>
    <property type="project" value="UniProtKB-UniRule"/>
</dbReference>
<dbReference type="GO" id="GO:0019386">
    <property type="term" value="P:methanogenesis, from carbon dioxide"/>
    <property type="evidence" value="ECO:0007669"/>
    <property type="project" value="UniProtKB-UniRule"/>
</dbReference>
<dbReference type="GO" id="GO:0006730">
    <property type="term" value="P:one-carbon metabolic process"/>
    <property type="evidence" value="ECO:0007669"/>
    <property type="project" value="UniProtKB-UniRule"/>
</dbReference>
<dbReference type="FunFam" id="1.20.120.1300:FF:000001">
    <property type="entry name" value="5,10-methenyltetrahydromethanopterin hydrogenase"/>
    <property type="match status" value="1"/>
</dbReference>
<dbReference type="FunFam" id="3.40.50.720:FF:001042">
    <property type="entry name" value="5,10-methenyltetrahydromethanopterin hydrogenase"/>
    <property type="match status" value="1"/>
</dbReference>
<dbReference type="Gene3D" id="1.20.120.1300">
    <property type="entry name" value="Hmd, C-terminal helical subdomain"/>
    <property type="match status" value="1"/>
</dbReference>
<dbReference type="Gene3D" id="3.40.50.720">
    <property type="entry name" value="NAD(P)-binding Rossmann-like Domain"/>
    <property type="match status" value="1"/>
</dbReference>
<dbReference type="HAMAP" id="MF_01090">
    <property type="entry name" value="HMD"/>
    <property type="match status" value="1"/>
</dbReference>
<dbReference type="InterPro" id="IPR008927">
    <property type="entry name" value="6-PGluconate_DH-like_C_sf"/>
</dbReference>
<dbReference type="InterPro" id="IPR010062">
    <property type="entry name" value="HMD"/>
</dbReference>
<dbReference type="InterPro" id="IPR004889">
    <property type="entry name" value="HMD_C"/>
</dbReference>
<dbReference type="InterPro" id="IPR038182">
    <property type="entry name" value="HMD_C_sf"/>
</dbReference>
<dbReference type="InterPro" id="IPR055205">
    <property type="entry name" value="HMD_N"/>
</dbReference>
<dbReference type="InterPro" id="IPR024190">
    <property type="entry name" value="METHMP_Hmd"/>
</dbReference>
<dbReference type="InterPro" id="IPR036291">
    <property type="entry name" value="NAD(P)-bd_dom_sf"/>
</dbReference>
<dbReference type="NCBIfam" id="TIGR01723">
    <property type="entry name" value="hmd_TIGR"/>
    <property type="match status" value="1"/>
</dbReference>
<dbReference type="Pfam" id="PF03201">
    <property type="entry name" value="HMD"/>
    <property type="match status" value="1"/>
</dbReference>
<dbReference type="Pfam" id="PF22616">
    <property type="entry name" value="HMD_N"/>
    <property type="match status" value="1"/>
</dbReference>
<dbReference type="PIRSF" id="PIRSF016158">
    <property type="entry name" value="HMD"/>
    <property type="match status" value="1"/>
</dbReference>
<dbReference type="PIRSF" id="PIRSF500165">
    <property type="entry name" value="HMDI"/>
    <property type="match status" value="1"/>
</dbReference>
<dbReference type="SUPFAM" id="SSF48179">
    <property type="entry name" value="6-phosphogluconate dehydrogenase C-terminal domain-like"/>
    <property type="match status" value="1"/>
</dbReference>
<dbReference type="SUPFAM" id="SSF51735">
    <property type="entry name" value="NAD(P)-binding Rossmann-fold domains"/>
    <property type="match status" value="1"/>
</dbReference>